<sequence>MASLRKTHPLLKIANDALVDLPAPSNISVWWNFGSLLGLCLAAQILTGLFLAMHYTSDITTAFSSVAHICRDVNYGWLIRNMHANGASFFFICIYLHIGRGLYYGSYLYKETWNVGVVLLLLVMMTAFVGYVLPWGQMSFWGATVITNLLSAVPYIGNSLVQWLWGGFSVDNATLTRFFAFHFLLPFIIAAMTMIHLIFLHETGSTNPAGLNSDAEKISFHPYFSYEDLLGFAMLLVALIALALFTPNLLGDPDNFTPANPLVTPPHIKPEWYFLFAYAILRSIPNKLGGVLALLFSILILMLVPILHTSKLRALTFRPLTQCLFWLLVADVMILTWIGGMPVEHPFIIIGQIASILYFTIFLFLLPTAGLAENKIFT</sequence>
<organism>
    <name type="scientific">Aequidens tetramerus</name>
    <name type="common">Saddle cichlid</name>
    <dbReference type="NCBI Taxonomy" id="172531"/>
    <lineage>
        <taxon>Eukaryota</taxon>
        <taxon>Metazoa</taxon>
        <taxon>Chordata</taxon>
        <taxon>Craniata</taxon>
        <taxon>Vertebrata</taxon>
        <taxon>Euteleostomi</taxon>
        <taxon>Actinopterygii</taxon>
        <taxon>Neopterygii</taxon>
        <taxon>Teleostei</taxon>
        <taxon>Neoteleostei</taxon>
        <taxon>Acanthomorphata</taxon>
        <taxon>Ovalentaria</taxon>
        <taxon>Cichlomorphae</taxon>
        <taxon>Cichliformes</taxon>
        <taxon>Cichlidae</taxon>
        <taxon>New World cichlids</taxon>
        <taxon>Cichlasomatinae</taxon>
        <taxon>Cichlasomatini</taxon>
        <taxon>Aequidens</taxon>
    </lineage>
</organism>
<comment type="function">
    <text evidence="2">Component of the ubiquinol-cytochrome c reductase complex (complex III or cytochrome b-c1 complex) that is part of the mitochondrial respiratory chain. The b-c1 complex mediates electron transfer from ubiquinol to cytochrome c. Contributes to the generation of a proton gradient across the mitochondrial membrane that is then used for ATP synthesis.</text>
</comment>
<comment type="cofactor">
    <cofactor evidence="2">
        <name>heme b</name>
        <dbReference type="ChEBI" id="CHEBI:60344"/>
    </cofactor>
    <text evidence="2">Binds 2 heme b groups non-covalently.</text>
</comment>
<comment type="subunit">
    <text evidence="2">The cytochrome bc1 complex contains 3 respiratory subunits (MT-CYB, CYC1 and UQCRFS1), 2 core proteins (UQCRC1 and UQCRC2) and probably 6 low-molecular weight proteins.</text>
</comment>
<comment type="subcellular location">
    <subcellularLocation>
        <location evidence="2">Mitochondrion inner membrane</location>
        <topology evidence="2">Multi-pass membrane protein</topology>
    </subcellularLocation>
</comment>
<comment type="miscellaneous">
    <text evidence="1">Heme 1 (or BL or b562) is low-potential and absorbs at about 562 nm, and heme 2 (or BH or b566) is high-potential and absorbs at about 566 nm.</text>
</comment>
<comment type="similarity">
    <text evidence="3 4">Belongs to the cytochrome b family.</text>
</comment>
<comment type="caution">
    <text evidence="2">The full-length protein contains only eight transmembrane helices, not nine as predicted by bioinformatics tools.</text>
</comment>
<gene>
    <name type="primary">mt-cyb</name>
    <name type="synonym">cob</name>
    <name type="synonym">cytb</name>
    <name type="synonym">mtcyb</name>
</gene>
<dbReference type="EMBL" id="AY050609">
    <property type="protein sequence ID" value="AAL08374.1"/>
    <property type="molecule type" value="Genomic_DNA"/>
</dbReference>
<dbReference type="SMR" id="Q8LZ97"/>
<dbReference type="GO" id="GO:0005743">
    <property type="term" value="C:mitochondrial inner membrane"/>
    <property type="evidence" value="ECO:0007669"/>
    <property type="project" value="UniProtKB-SubCell"/>
</dbReference>
<dbReference type="GO" id="GO:0045275">
    <property type="term" value="C:respiratory chain complex III"/>
    <property type="evidence" value="ECO:0007669"/>
    <property type="project" value="InterPro"/>
</dbReference>
<dbReference type="GO" id="GO:0046872">
    <property type="term" value="F:metal ion binding"/>
    <property type="evidence" value="ECO:0007669"/>
    <property type="project" value="UniProtKB-KW"/>
</dbReference>
<dbReference type="GO" id="GO:0008121">
    <property type="term" value="F:ubiquinol-cytochrome-c reductase activity"/>
    <property type="evidence" value="ECO:0007669"/>
    <property type="project" value="InterPro"/>
</dbReference>
<dbReference type="GO" id="GO:0006122">
    <property type="term" value="P:mitochondrial electron transport, ubiquinol to cytochrome c"/>
    <property type="evidence" value="ECO:0007669"/>
    <property type="project" value="TreeGrafter"/>
</dbReference>
<dbReference type="CDD" id="cd00290">
    <property type="entry name" value="cytochrome_b_C"/>
    <property type="match status" value="1"/>
</dbReference>
<dbReference type="CDD" id="cd00284">
    <property type="entry name" value="Cytochrome_b_N"/>
    <property type="match status" value="1"/>
</dbReference>
<dbReference type="FunFam" id="1.20.810.10:FF:000002">
    <property type="entry name" value="Cytochrome b"/>
    <property type="match status" value="1"/>
</dbReference>
<dbReference type="Gene3D" id="1.20.810.10">
    <property type="entry name" value="Cytochrome Bc1 Complex, Chain C"/>
    <property type="match status" value="1"/>
</dbReference>
<dbReference type="InterPro" id="IPR005798">
    <property type="entry name" value="Cyt_b/b6_C"/>
</dbReference>
<dbReference type="InterPro" id="IPR036150">
    <property type="entry name" value="Cyt_b/b6_C_sf"/>
</dbReference>
<dbReference type="InterPro" id="IPR005797">
    <property type="entry name" value="Cyt_b/b6_N"/>
</dbReference>
<dbReference type="InterPro" id="IPR027387">
    <property type="entry name" value="Cytb/b6-like_sf"/>
</dbReference>
<dbReference type="InterPro" id="IPR030689">
    <property type="entry name" value="Cytochrome_b"/>
</dbReference>
<dbReference type="InterPro" id="IPR048260">
    <property type="entry name" value="Cytochrome_b_C_euk/bac"/>
</dbReference>
<dbReference type="InterPro" id="IPR048259">
    <property type="entry name" value="Cytochrome_b_N_euk/bac"/>
</dbReference>
<dbReference type="InterPro" id="IPR016174">
    <property type="entry name" value="Di-haem_cyt_TM"/>
</dbReference>
<dbReference type="PANTHER" id="PTHR19271">
    <property type="entry name" value="CYTOCHROME B"/>
    <property type="match status" value="1"/>
</dbReference>
<dbReference type="PANTHER" id="PTHR19271:SF16">
    <property type="entry name" value="CYTOCHROME B"/>
    <property type="match status" value="1"/>
</dbReference>
<dbReference type="Pfam" id="PF00032">
    <property type="entry name" value="Cytochrom_B_C"/>
    <property type="match status" value="1"/>
</dbReference>
<dbReference type="Pfam" id="PF00033">
    <property type="entry name" value="Cytochrome_B"/>
    <property type="match status" value="1"/>
</dbReference>
<dbReference type="PIRSF" id="PIRSF038885">
    <property type="entry name" value="COB"/>
    <property type="match status" value="1"/>
</dbReference>
<dbReference type="SUPFAM" id="SSF81648">
    <property type="entry name" value="a domain/subunit of cytochrome bc1 complex (Ubiquinol-cytochrome c reductase)"/>
    <property type="match status" value="1"/>
</dbReference>
<dbReference type="SUPFAM" id="SSF81342">
    <property type="entry name" value="Transmembrane di-heme cytochromes"/>
    <property type="match status" value="1"/>
</dbReference>
<dbReference type="PROSITE" id="PS51003">
    <property type="entry name" value="CYTB_CTER"/>
    <property type="match status" value="1"/>
</dbReference>
<dbReference type="PROSITE" id="PS51002">
    <property type="entry name" value="CYTB_NTER"/>
    <property type="match status" value="1"/>
</dbReference>
<protein>
    <recommendedName>
        <fullName>Cytochrome b</fullName>
    </recommendedName>
    <alternativeName>
        <fullName>Complex III subunit 3</fullName>
    </alternativeName>
    <alternativeName>
        <fullName>Complex III subunit III</fullName>
    </alternativeName>
    <alternativeName>
        <fullName>Cytochrome b-c1 complex subunit 3</fullName>
    </alternativeName>
    <alternativeName>
        <fullName>Ubiquinol-cytochrome-c reductase complex cytochrome b subunit</fullName>
    </alternativeName>
</protein>
<evidence type="ECO:0000250" key="1"/>
<evidence type="ECO:0000250" key="2">
    <source>
        <dbReference type="UniProtKB" id="P00157"/>
    </source>
</evidence>
<evidence type="ECO:0000255" key="3">
    <source>
        <dbReference type="PROSITE-ProRule" id="PRU00967"/>
    </source>
</evidence>
<evidence type="ECO:0000255" key="4">
    <source>
        <dbReference type="PROSITE-ProRule" id="PRU00968"/>
    </source>
</evidence>
<keyword id="KW-0249">Electron transport</keyword>
<keyword id="KW-0349">Heme</keyword>
<keyword id="KW-0408">Iron</keyword>
<keyword id="KW-0472">Membrane</keyword>
<keyword id="KW-0479">Metal-binding</keyword>
<keyword id="KW-0496">Mitochondrion</keyword>
<keyword id="KW-0999">Mitochondrion inner membrane</keyword>
<keyword id="KW-0679">Respiratory chain</keyword>
<keyword id="KW-0812">Transmembrane</keyword>
<keyword id="KW-1133">Transmembrane helix</keyword>
<keyword id="KW-0813">Transport</keyword>
<keyword id="KW-0830">Ubiquinone</keyword>
<feature type="chain" id="PRO_0000060534" description="Cytochrome b">
    <location>
        <begin position="1"/>
        <end position="378"/>
    </location>
</feature>
<feature type="transmembrane region" description="Helical" evidence="2">
    <location>
        <begin position="33"/>
        <end position="53"/>
    </location>
</feature>
<feature type="transmembrane region" description="Helical" evidence="2">
    <location>
        <begin position="77"/>
        <end position="98"/>
    </location>
</feature>
<feature type="transmembrane region" description="Helical" evidence="2">
    <location>
        <begin position="113"/>
        <end position="133"/>
    </location>
</feature>
<feature type="transmembrane region" description="Helical" evidence="2">
    <location>
        <begin position="178"/>
        <end position="198"/>
    </location>
</feature>
<feature type="transmembrane region" description="Helical" evidence="2">
    <location>
        <begin position="226"/>
        <end position="246"/>
    </location>
</feature>
<feature type="transmembrane region" description="Helical" evidence="2">
    <location>
        <begin position="288"/>
        <end position="308"/>
    </location>
</feature>
<feature type="transmembrane region" description="Helical" evidence="2">
    <location>
        <begin position="320"/>
        <end position="340"/>
    </location>
</feature>
<feature type="transmembrane region" description="Helical" evidence="2">
    <location>
        <begin position="347"/>
        <end position="367"/>
    </location>
</feature>
<feature type="binding site" description="axial binding residue" evidence="2">
    <location>
        <position position="83"/>
    </location>
    <ligand>
        <name>heme b</name>
        <dbReference type="ChEBI" id="CHEBI:60344"/>
        <label>b562</label>
    </ligand>
    <ligandPart>
        <name>Fe</name>
        <dbReference type="ChEBI" id="CHEBI:18248"/>
    </ligandPart>
</feature>
<feature type="binding site" description="axial binding residue" evidence="2">
    <location>
        <position position="97"/>
    </location>
    <ligand>
        <name>heme b</name>
        <dbReference type="ChEBI" id="CHEBI:60344"/>
        <label>b566</label>
    </ligand>
    <ligandPart>
        <name>Fe</name>
        <dbReference type="ChEBI" id="CHEBI:18248"/>
    </ligandPart>
</feature>
<feature type="binding site" description="axial binding residue" evidence="2">
    <location>
        <position position="182"/>
    </location>
    <ligand>
        <name>heme b</name>
        <dbReference type="ChEBI" id="CHEBI:60344"/>
        <label>b562</label>
    </ligand>
    <ligandPart>
        <name>Fe</name>
        <dbReference type="ChEBI" id="CHEBI:18248"/>
    </ligandPart>
</feature>
<feature type="binding site" description="axial binding residue" evidence="2">
    <location>
        <position position="196"/>
    </location>
    <ligand>
        <name>heme b</name>
        <dbReference type="ChEBI" id="CHEBI:60344"/>
        <label>b566</label>
    </ligand>
    <ligandPart>
        <name>Fe</name>
        <dbReference type="ChEBI" id="CHEBI:18248"/>
    </ligandPart>
</feature>
<feature type="binding site" evidence="2">
    <location>
        <position position="201"/>
    </location>
    <ligand>
        <name>a ubiquinone</name>
        <dbReference type="ChEBI" id="CHEBI:16389"/>
    </ligand>
</feature>
<accession>Q8LZ97</accession>
<proteinExistence type="inferred from homology"/>
<geneLocation type="mitochondrion"/>
<name>CYB_AEQTE</name>
<reference key="1">
    <citation type="submission" date="2001-08" db="EMBL/GenBank/DDBJ databases">
        <title>Phylogeny of the Central American Cichlidae (Teleostei: Perciformes) based on combined morphobehavioral and cytochrome b data.</title>
        <authorList>
            <person name="Rican O."/>
            <person name="Zrzavy J."/>
            <person name="Obornik M."/>
            <person name="Novak J."/>
        </authorList>
    </citation>
    <scope>NUCLEOTIDE SEQUENCE [GENOMIC DNA]</scope>
</reference>